<gene>
    <name evidence="1" type="primary">rhaA</name>
    <name type="ordered locus">EC55989_4381</name>
</gene>
<feature type="chain" id="PRO_1000146581" description="L-rhamnose isomerase">
    <location>
        <begin position="1"/>
        <end position="419"/>
    </location>
</feature>
<feature type="binding site" evidence="1">
    <location>
        <position position="262"/>
    </location>
    <ligand>
        <name>Mn(2+)</name>
        <dbReference type="ChEBI" id="CHEBI:29035"/>
    </ligand>
</feature>
<feature type="binding site" evidence="1">
    <location>
        <position position="294"/>
    </location>
    <ligand>
        <name>Mn(2+)</name>
        <dbReference type="ChEBI" id="CHEBI:29035"/>
    </ligand>
</feature>
<feature type="binding site" evidence="1">
    <location>
        <position position="296"/>
    </location>
    <ligand>
        <name>Mn(2+)</name>
        <dbReference type="ChEBI" id="CHEBI:29035"/>
    </ligand>
</feature>
<accession>B7L9F3</accession>
<dbReference type="EC" id="5.3.1.14" evidence="1"/>
<dbReference type="EMBL" id="CU928145">
    <property type="protein sequence ID" value="CAV01088.1"/>
    <property type="molecule type" value="Genomic_DNA"/>
</dbReference>
<dbReference type="RefSeq" id="WP_001325794.1">
    <property type="nucleotide sequence ID" value="NC_011748.1"/>
</dbReference>
<dbReference type="SMR" id="B7L9F3"/>
<dbReference type="GeneID" id="75204577"/>
<dbReference type="KEGG" id="eck:EC55989_4381"/>
<dbReference type="HOGENOM" id="CLU_052790_0_0_6"/>
<dbReference type="UniPathway" id="UPA00541">
    <property type="reaction ID" value="UER00601"/>
</dbReference>
<dbReference type="Proteomes" id="UP000000746">
    <property type="component" value="Chromosome"/>
</dbReference>
<dbReference type="GO" id="GO:0005737">
    <property type="term" value="C:cytoplasm"/>
    <property type="evidence" value="ECO:0007669"/>
    <property type="project" value="UniProtKB-SubCell"/>
</dbReference>
<dbReference type="GO" id="GO:0008740">
    <property type="term" value="F:L-rhamnose isomerase activity"/>
    <property type="evidence" value="ECO:0007669"/>
    <property type="project" value="UniProtKB-UniRule"/>
</dbReference>
<dbReference type="GO" id="GO:0030145">
    <property type="term" value="F:manganese ion binding"/>
    <property type="evidence" value="ECO:0007669"/>
    <property type="project" value="UniProtKB-UniRule"/>
</dbReference>
<dbReference type="GO" id="GO:0019324">
    <property type="term" value="P:L-lyxose metabolic process"/>
    <property type="evidence" value="ECO:0007669"/>
    <property type="project" value="TreeGrafter"/>
</dbReference>
<dbReference type="GO" id="GO:0019301">
    <property type="term" value="P:rhamnose catabolic process"/>
    <property type="evidence" value="ECO:0007669"/>
    <property type="project" value="UniProtKB-UniRule"/>
</dbReference>
<dbReference type="FunFam" id="3.20.20.150:FF:000006">
    <property type="entry name" value="L-rhamnose isomerase"/>
    <property type="match status" value="1"/>
</dbReference>
<dbReference type="Gene3D" id="3.20.20.150">
    <property type="entry name" value="Divalent-metal-dependent TIM barrel enzymes"/>
    <property type="match status" value="1"/>
</dbReference>
<dbReference type="HAMAP" id="MF_00541">
    <property type="entry name" value="RhaA"/>
    <property type="match status" value="1"/>
</dbReference>
<dbReference type="InterPro" id="IPR050337">
    <property type="entry name" value="L-rhamnose_isomerase"/>
</dbReference>
<dbReference type="InterPro" id="IPR009308">
    <property type="entry name" value="Rhamnose_isomerase"/>
</dbReference>
<dbReference type="InterPro" id="IPR036237">
    <property type="entry name" value="Xyl_isomerase-like_sf"/>
</dbReference>
<dbReference type="NCBIfam" id="NF002203">
    <property type="entry name" value="PRK01076.1"/>
    <property type="match status" value="1"/>
</dbReference>
<dbReference type="NCBIfam" id="TIGR01748">
    <property type="entry name" value="rhaA"/>
    <property type="match status" value="1"/>
</dbReference>
<dbReference type="PANTHER" id="PTHR30268">
    <property type="entry name" value="L-RHAMNOSE ISOMERASE"/>
    <property type="match status" value="1"/>
</dbReference>
<dbReference type="PANTHER" id="PTHR30268:SF0">
    <property type="entry name" value="L-RHAMNOSE ISOMERASE"/>
    <property type="match status" value="1"/>
</dbReference>
<dbReference type="Pfam" id="PF06134">
    <property type="entry name" value="RhaA"/>
    <property type="match status" value="1"/>
</dbReference>
<dbReference type="SUPFAM" id="SSF51658">
    <property type="entry name" value="Xylose isomerase-like"/>
    <property type="match status" value="1"/>
</dbReference>
<sequence>MTTQLEQAWELAKQRFAAVGIDVEEALRQLDRLPVSMHCWQGDDVSGFENPEGSLTGGIQATGNYPGKARNASELRTDLEQAMRLIPGPKRLNLHAIYLESDTPVSRDQIKPEHFKNWVEWAKANQLGLDFNPSCFSHPLSADGFTLSHADDSIRQFWIDHCKASRRVSAYFGEQLGTPSVMNIWIPDGMKDITVDRLAPRQRLLAALDEVISEKLNPAHHIDAVESKLFGIGAESYTVGSNEFYMGYATSRQTALCLDAGHFHPTEVISDKISAAMLYVPQLLLHVSRPVRWDSDHVVLLDDETQAIASEIVRHDLFDRVHIGLDFFDASINRIAAWVIGTRNMKKALLRALLEPTAELRKLEAAGDYTARLALLEEQKSLPWQAVWEMYCQRHDTPTGSEWLESVRAYEKAILSQRG</sequence>
<protein>
    <recommendedName>
        <fullName evidence="1">L-rhamnose isomerase</fullName>
        <ecNumber evidence="1">5.3.1.14</ecNumber>
    </recommendedName>
</protein>
<evidence type="ECO:0000255" key="1">
    <source>
        <dbReference type="HAMAP-Rule" id="MF_00541"/>
    </source>
</evidence>
<comment type="function">
    <text evidence="1">Catalyzes the interconversion of L-rhamnose and L-rhamnulose.</text>
</comment>
<comment type="catalytic activity">
    <reaction evidence="1">
        <text>L-rhamnopyranose = L-rhamnulose</text>
        <dbReference type="Rhea" id="RHEA:23160"/>
        <dbReference type="ChEBI" id="CHEBI:17897"/>
        <dbReference type="ChEBI" id="CHEBI:62346"/>
        <dbReference type="EC" id="5.3.1.14"/>
    </reaction>
</comment>
<comment type="cofactor">
    <cofactor evidence="1">
        <name>Mn(2+)</name>
        <dbReference type="ChEBI" id="CHEBI:29035"/>
    </cofactor>
    <text evidence="1">Binds 1 Mn(2+) ion per subunit.</text>
</comment>
<comment type="pathway">
    <text evidence="1">Carbohydrate degradation; L-rhamnose degradation; glycerone phosphate from L-rhamnose: step 1/3.</text>
</comment>
<comment type="subunit">
    <text evidence="1">Homotetramer.</text>
</comment>
<comment type="subcellular location">
    <subcellularLocation>
        <location evidence="1">Cytoplasm</location>
    </subcellularLocation>
</comment>
<comment type="similarity">
    <text evidence="1">Belongs to the rhamnose isomerase family.</text>
</comment>
<proteinExistence type="inferred from homology"/>
<keyword id="KW-0963">Cytoplasm</keyword>
<keyword id="KW-0413">Isomerase</keyword>
<keyword id="KW-0464">Manganese</keyword>
<keyword id="KW-0479">Metal-binding</keyword>
<keyword id="KW-1185">Reference proteome</keyword>
<keyword id="KW-0684">Rhamnose metabolism</keyword>
<reference key="1">
    <citation type="journal article" date="2009" name="PLoS Genet.">
        <title>Organised genome dynamics in the Escherichia coli species results in highly diverse adaptive paths.</title>
        <authorList>
            <person name="Touchon M."/>
            <person name="Hoede C."/>
            <person name="Tenaillon O."/>
            <person name="Barbe V."/>
            <person name="Baeriswyl S."/>
            <person name="Bidet P."/>
            <person name="Bingen E."/>
            <person name="Bonacorsi S."/>
            <person name="Bouchier C."/>
            <person name="Bouvet O."/>
            <person name="Calteau A."/>
            <person name="Chiapello H."/>
            <person name="Clermont O."/>
            <person name="Cruveiller S."/>
            <person name="Danchin A."/>
            <person name="Diard M."/>
            <person name="Dossat C."/>
            <person name="Karoui M.E."/>
            <person name="Frapy E."/>
            <person name="Garry L."/>
            <person name="Ghigo J.M."/>
            <person name="Gilles A.M."/>
            <person name="Johnson J."/>
            <person name="Le Bouguenec C."/>
            <person name="Lescat M."/>
            <person name="Mangenot S."/>
            <person name="Martinez-Jehanne V."/>
            <person name="Matic I."/>
            <person name="Nassif X."/>
            <person name="Oztas S."/>
            <person name="Petit M.A."/>
            <person name="Pichon C."/>
            <person name="Rouy Z."/>
            <person name="Ruf C.S."/>
            <person name="Schneider D."/>
            <person name="Tourret J."/>
            <person name="Vacherie B."/>
            <person name="Vallenet D."/>
            <person name="Medigue C."/>
            <person name="Rocha E.P.C."/>
            <person name="Denamur E."/>
        </authorList>
    </citation>
    <scope>NUCLEOTIDE SEQUENCE [LARGE SCALE GENOMIC DNA]</scope>
    <source>
        <strain>55989 / EAEC</strain>
    </source>
</reference>
<organism>
    <name type="scientific">Escherichia coli (strain 55989 / EAEC)</name>
    <dbReference type="NCBI Taxonomy" id="585055"/>
    <lineage>
        <taxon>Bacteria</taxon>
        <taxon>Pseudomonadati</taxon>
        <taxon>Pseudomonadota</taxon>
        <taxon>Gammaproteobacteria</taxon>
        <taxon>Enterobacterales</taxon>
        <taxon>Enterobacteriaceae</taxon>
        <taxon>Escherichia</taxon>
    </lineage>
</organism>
<name>RHAA_ECO55</name>